<sequence length="411" mass="46624">MRFIEEFINKGYFHQCTDLDRLTAITKETKIAAYIGFDCTATSLHIGSLMQIMILRLLQQHGHKPIVIIGGGTSKIGDPTWKDEVRKILSKEDIAKNAEGIKKSLSKFIKFGDGKSDAIMLDNAEWLDSFNYLDFLRDFGSYFSVNRMLTMDSVKLRLEREQHLSFLEFNYMLLQAYDFYYLSKHYNCSLQLGGSDQWGNIVMGADLIRKISGKEVFGMTTPLLTTSSGAKMGKTAAGAVWLNEDLLSPYDYYQYWRNCEDADIVRFAKLYSEFTQEELNRFESLAAEDINAAKKQLAYELTKLCHSEQAAKSALETAVKIFEEGQIDENLPTVVLEQEVLQAGISAYELFHEAGLATSKSEARKLIRGNGAKINDRLVEDENMIINTNFLLDKKVIKLSAGKKKHILVRV</sequence>
<keyword id="KW-0030">Aminoacyl-tRNA synthetase</keyword>
<keyword id="KW-0067">ATP-binding</keyword>
<keyword id="KW-0963">Cytoplasm</keyword>
<keyword id="KW-0436">Ligase</keyword>
<keyword id="KW-0547">Nucleotide-binding</keyword>
<keyword id="KW-0648">Protein biosynthesis</keyword>
<keyword id="KW-0694">RNA-binding</keyword>
<comment type="function">
    <text evidence="1">Catalyzes the attachment of tyrosine to tRNA(Tyr) in a two-step reaction: tyrosine is first activated by ATP to form Tyr-AMP and then transferred to the acceptor end of tRNA(Tyr).</text>
</comment>
<comment type="catalytic activity">
    <reaction evidence="1">
        <text>tRNA(Tyr) + L-tyrosine + ATP = L-tyrosyl-tRNA(Tyr) + AMP + diphosphate + H(+)</text>
        <dbReference type="Rhea" id="RHEA:10220"/>
        <dbReference type="Rhea" id="RHEA-COMP:9706"/>
        <dbReference type="Rhea" id="RHEA-COMP:9707"/>
        <dbReference type="ChEBI" id="CHEBI:15378"/>
        <dbReference type="ChEBI" id="CHEBI:30616"/>
        <dbReference type="ChEBI" id="CHEBI:33019"/>
        <dbReference type="ChEBI" id="CHEBI:58315"/>
        <dbReference type="ChEBI" id="CHEBI:78442"/>
        <dbReference type="ChEBI" id="CHEBI:78536"/>
        <dbReference type="ChEBI" id="CHEBI:456215"/>
        <dbReference type="EC" id="6.1.1.1"/>
    </reaction>
</comment>
<comment type="subunit">
    <text evidence="1">Homodimer.</text>
</comment>
<comment type="subcellular location">
    <subcellularLocation>
        <location evidence="1">Cytoplasm</location>
    </subcellularLocation>
</comment>
<comment type="similarity">
    <text evidence="1">Belongs to the class-I aminoacyl-tRNA synthetase family. TyrS type 1 subfamily.</text>
</comment>
<gene>
    <name evidence="1" type="primary">tyrS</name>
    <name type="ordered locus">RC0823</name>
</gene>
<name>SYY_RICCN</name>
<evidence type="ECO:0000255" key="1">
    <source>
        <dbReference type="HAMAP-Rule" id="MF_02006"/>
    </source>
</evidence>
<protein>
    <recommendedName>
        <fullName evidence="1">Tyrosine--tRNA ligase</fullName>
        <ecNumber evidence="1">6.1.1.1</ecNumber>
    </recommendedName>
    <alternativeName>
        <fullName evidence="1">Tyrosyl-tRNA synthetase</fullName>
        <shortName evidence="1">TyrRS</shortName>
    </alternativeName>
</protein>
<proteinExistence type="inferred from homology"/>
<dbReference type="EC" id="6.1.1.1" evidence="1"/>
<dbReference type="EMBL" id="AE006914">
    <property type="protein sequence ID" value="AAL03361.1"/>
    <property type="molecule type" value="Genomic_DNA"/>
</dbReference>
<dbReference type="PIR" id="G97802">
    <property type="entry name" value="G97802"/>
</dbReference>
<dbReference type="RefSeq" id="WP_010977431.1">
    <property type="nucleotide sequence ID" value="NC_003103.1"/>
</dbReference>
<dbReference type="SMR" id="Q92HE8"/>
<dbReference type="GeneID" id="927785"/>
<dbReference type="KEGG" id="rco:RC0823"/>
<dbReference type="PATRIC" id="fig|272944.4.peg.934"/>
<dbReference type="HOGENOM" id="CLU_024003_0_3_5"/>
<dbReference type="Proteomes" id="UP000000816">
    <property type="component" value="Chromosome"/>
</dbReference>
<dbReference type="GO" id="GO:0005829">
    <property type="term" value="C:cytosol"/>
    <property type="evidence" value="ECO:0007669"/>
    <property type="project" value="TreeGrafter"/>
</dbReference>
<dbReference type="GO" id="GO:0005524">
    <property type="term" value="F:ATP binding"/>
    <property type="evidence" value="ECO:0007669"/>
    <property type="project" value="UniProtKB-UniRule"/>
</dbReference>
<dbReference type="GO" id="GO:0003723">
    <property type="term" value="F:RNA binding"/>
    <property type="evidence" value="ECO:0007669"/>
    <property type="project" value="UniProtKB-KW"/>
</dbReference>
<dbReference type="GO" id="GO:0004831">
    <property type="term" value="F:tyrosine-tRNA ligase activity"/>
    <property type="evidence" value="ECO:0007669"/>
    <property type="project" value="UniProtKB-UniRule"/>
</dbReference>
<dbReference type="GO" id="GO:0006437">
    <property type="term" value="P:tyrosyl-tRNA aminoacylation"/>
    <property type="evidence" value="ECO:0007669"/>
    <property type="project" value="UniProtKB-UniRule"/>
</dbReference>
<dbReference type="CDD" id="cd00165">
    <property type="entry name" value="S4"/>
    <property type="match status" value="1"/>
</dbReference>
<dbReference type="CDD" id="cd00805">
    <property type="entry name" value="TyrRS_core"/>
    <property type="match status" value="1"/>
</dbReference>
<dbReference type="FunFam" id="1.10.240.10:FF:000001">
    <property type="entry name" value="Tyrosine--tRNA ligase"/>
    <property type="match status" value="1"/>
</dbReference>
<dbReference type="Gene3D" id="3.40.50.620">
    <property type="entry name" value="HUPs"/>
    <property type="match status" value="1"/>
</dbReference>
<dbReference type="Gene3D" id="3.10.290.10">
    <property type="entry name" value="RNA-binding S4 domain"/>
    <property type="match status" value="1"/>
</dbReference>
<dbReference type="Gene3D" id="1.10.240.10">
    <property type="entry name" value="Tyrosyl-Transfer RNA Synthetase"/>
    <property type="match status" value="1"/>
</dbReference>
<dbReference type="HAMAP" id="MF_02006">
    <property type="entry name" value="Tyr_tRNA_synth_type1"/>
    <property type="match status" value="1"/>
</dbReference>
<dbReference type="InterPro" id="IPR002305">
    <property type="entry name" value="aa-tRNA-synth_Ic"/>
</dbReference>
<dbReference type="InterPro" id="IPR014729">
    <property type="entry name" value="Rossmann-like_a/b/a_fold"/>
</dbReference>
<dbReference type="InterPro" id="IPR036986">
    <property type="entry name" value="S4_RNA-bd_sf"/>
</dbReference>
<dbReference type="InterPro" id="IPR054608">
    <property type="entry name" value="SYY-like_C"/>
</dbReference>
<dbReference type="InterPro" id="IPR002307">
    <property type="entry name" value="Tyr-tRNA-ligase"/>
</dbReference>
<dbReference type="InterPro" id="IPR024088">
    <property type="entry name" value="Tyr-tRNA-ligase_bac-type"/>
</dbReference>
<dbReference type="InterPro" id="IPR024107">
    <property type="entry name" value="Tyr-tRNA-ligase_bac_1"/>
</dbReference>
<dbReference type="NCBIfam" id="TIGR00234">
    <property type="entry name" value="tyrS"/>
    <property type="match status" value="1"/>
</dbReference>
<dbReference type="PANTHER" id="PTHR11766:SF0">
    <property type="entry name" value="TYROSINE--TRNA LIGASE, MITOCHONDRIAL"/>
    <property type="match status" value="1"/>
</dbReference>
<dbReference type="PANTHER" id="PTHR11766">
    <property type="entry name" value="TYROSYL-TRNA SYNTHETASE"/>
    <property type="match status" value="1"/>
</dbReference>
<dbReference type="Pfam" id="PF22421">
    <property type="entry name" value="SYY_C-terminal"/>
    <property type="match status" value="1"/>
</dbReference>
<dbReference type="Pfam" id="PF00579">
    <property type="entry name" value="tRNA-synt_1b"/>
    <property type="match status" value="1"/>
</dbReference>
<dbReference type="PRINTS" id="PR01040">
    <property type="entry name" value="TRNASYNTHTYR"/>
</dbReference>
<dbReference type="SUPFAM" id="SSF55174">
    <property type="entry name" value="Alpha-L RNA-binding motif"/>
    <property type="match status" value="1"/>
</dbReference>
<dbReference type="SUPFAM" id="SSF52374">
    <property type="entry name" value="Nucleotidylyl transferase"/>
    <property type="match status" value="1"/>
</dbReference>
<dbReference type="PROSITE" id="PS50889">
    <property type="entry name" value="S4"/>
    <property type="match status" value="1"/>
</dbReference>
<reference key="1">
    <citation type="journal article" date="2001" name="Science">
        <title>Mechanisms of evolution in Rickettsia conorii and R. prowazekii.</title>
        <authorList>
            <person name="Ogata H."/>
            <person name="Audic S."/>
            <person name="Renesto-Audiffren P."/>
            <person name="Fournier P.-E."/>
            <person name="Barbe V."/>
            <person name="Samson D."/>
            <person name="Roux V."/>
            <person name="Cossart P."/>
            <person name="Weissenbach J."/>
            <person name="Claverie J.-M."/>
            <person name="Raoult D."/>
        </authorList>
    </citation>
    <scope>NUCLEOTIDE SEQUENCE [LARGE SCALE GENOMIC DNA]</scope>
    <source>
        <strain>ATCC VR-613 / Malish 7</strain>
    </source>
</reference>
<accession>Q92HE8</accession>
<organism>
    <name type="scientific">Rickettsia conorii (strain ATCC VR-613 / Malish 7)</name>
    <dbReference type="NCBI Taxonomy" id="272944"/>
    <lineage>
        <taxon>Bacteria</taxon>
        <taxon>Pseudomonadati</taxon>
        <taxon>Pseudomonadota</taxon>
        <taxon>Alphaproteobacteria</taxon>
        <taxon>Rickettsiales</taxon>
        <taxon>Rickettsiaceae</taxon>
        <taxon>Rickettsieae</taxon>
        <taxon>Rickettsia</taxon>
        <taxon>spotted fever group</taxon>
    </lineage>
</organism>
<feature type="chain" id="PRO_0000055662" description="Tyrosine--tRNA ligase">
    <location>
        <begin position="1"/>
        <end position="411"/>
    </location>
</feature>
<feature type="domain" description="S4 RNA-binding" evidence="1">
    <location>
        <begin position="345"/>
        <end position="411"/>
    </location>
</feature>
<feature type="short sequence motif" description="'HIGH' region">
    <location>
        <begin position="39"/>
        <end position="48"/>
    </location>
</feature>
<feature type="short sequence motif" description="'KMSKS' region">
    <location>
        <begin position="231"/>
        <end position="235"/>
    </location>
</feature>
<feature type="binding site" evidence="1">
    <location>
        <position position="34"/>
    </location>
    <ligand>
        <name>L-tyrosine</name>
        <dbReference type="ChEBI" id="CHEBI:58315"/>
    </ligand>
</feature>
<feature type="binding site" evidence="1">
    <location>
        <position position="171"/>
    </location>
    <ligand>
        <name>L-tyrosine</name>
        <dbReference type="ChEBI" id="CHEBI:58315"/>
    </ligand>
</feature>
<feature type="binding site" evidence="1">
    <location>
        <position position="175"/>
    </location>
    <ligand>
        <name>L-tyrosine</name>
        <dbReference type="ChEBI" id="CHEBI:58315"/>
    </ligand>
</feature>
<feature type="binding site" evidence="1">
    <location>
        <position position="234"/>
    </location>
    <ligand>
        <name>ATP</name>
        <dbReference type="ChEBI" id="CHEBI:30616"/>
    </ligand>
</feature>